<reference evidence="7 9" key="1">
    <citation type="journal article" date="2002" name="Brain Res. Mol. Brain Res.">
        <title>Zebrafish melanopsin: isolation, tissue localisation and phylogenetic position.</title>
        <authorList>
            <person name="Bellingham J."/>
            <person name="Whitmore D."/>
            <person name="Philp A.R."/>
            <person name="Wells D.J."/>
            <person name="Foster R.G."/>
        </authorList>
    </citation>
    <scope>NUCLEOTIDE SEQUENCE [MRNA]</scope>
    <scope>TISSUE SPECIFICITY</scope>
    <source>
        <tissue evidence="9">Retina</tissue>
    </source>
</reference>
<reference evidence="8" key="2">
    <citation type="submission" date="2006-05" db="EMBL/GenBank/DDBJ databases">
        <authorList>
            <consortium name="NIH - Zebrafish Gene Collection (ZGC) project"/>
        </authorList>
    </citation>
    <scope>NUCLEOTIDE SEQUENCE [LARGE SCALE MRNA]</scope>
</reference>
<protein>
    <recommendedName>
        <fullName>Melanopsin-like</fullName>
    </recommendedName>
    <alternativeName>
        <fullName>Melanopsin</fullName>
    </alternativeName>
    <alternativeName>
        <fullName>Opsin-4-like</fullName>
    </alternativeName>
</protein>
<keyword id="KW-1003">Cell membrane</keyword>
<keyword id="KW-0157">Chromophore</keyword>
<keyword id="KW-1015">Disulfide bond</keyword>
<keyword id="KW-0297">G-protein coupled receptor</keyword>
<keyword id="KW-0325">Glycoprotein</keyword>
<keyword id="KW-0472">Membrane</keyword>
<keyword id="KW-0600">Photoreceptor protein</keyword>
<keyword id="KW-0675">Receptor</keyword>
<keyword id="KW-1185">Reference proteome</keyword>
<keyword id="KW-0681">Retinal protein</keyword>
<keyword id="KW-0716">Sensory transduction</keyword>
<keyword id="KW-0807">Transducer</keyword>
<keyword id="KW-0812">Transmembrane</keyword>
<keyword id="KW-1133">Transmembrane helix</keyword>
<accession>Q1JPS6</accession>
<accession>Q8AV31</accession>
<gene>
    <name type="primary">opn4l</name>
    <name type="synonym">opn4c</name>
    <name type="synonym">opn4m2</name>
</gene>
<organism>
    <name type="scientific">Danio rerio</name>
    <name type="common">Zebrafish</name>
    <name type="synonym">Brachydanio rerio</name>
    <dbReference type="NCBI Taxonomy" id="7955"/>
    <lineage>
        <taxon>Eukaryota</taxon>
        <taxon>Metazoa</taxon>
        <taxon>Chordata</taxon>
        <taxon>Craniata</taxon>
        <taxon>Vertebrata</taxon>
        <taxon>Euteleostomi</taxon>
        <taxon>Actinopterygii</taxon>
        <taxon>Neopterygii</taxon>
        <taxon>Teleostei</taxon>
        <taxon>Ostariophysi</taxon>
        <taxon>Cypriniformes</taxon>
        <taxon>Danionidae</taxon>
        <taxon>Danioninae</taxon>
        <taxon>Danio</taxon>
    </lineage>
</organism>
<comment type="function">
    <text evidence="2">Photoreceptor implicated in non-image-forming responses to light.</text>
</comment>
<comment type="subcellular location">
    <subcellularLocation>
        <location evidence="2">Cell membrane</location>
        <topology evidence="3">Multi-pass membrane protein</topology>
    </subcellularLocation>
</comment>
<comment type="tissue specificity">
    <text evidence="6">Expressed in a subset of retinal horizontal cells.</text>
</comment>
<comment type="similarity">
    <text evidence="4">Belongs to the G-protein coupled receptor 1 family. Opsin subfamily.</text>
</comment>
<dbReference type="EMBL" id="AY078161">
    <property type="protein sequence ID" value="AAL82577.1"/>
    <property type="molecule type" value="mRNA"/>
</dbReference>
<dbReference type="EMBL" id="BC116614">
    <property type="protein sequence ID" value="AAI16615.1"/>
    <property type="molecule type" value="mRNA"/>
</dbReference>
<dbReference type="RefSeq" id="NP_840074.2">
    <property type="nucleotide sequence ID" value="NM_178289.3"/>
</dbReference>
<dbReference type="SMR" id="Q1JPS6"/>
<dbReference type="FunCoup" id="Q1JPS6">
    <property type="interactions" value="2"/>
</dbReference>
<dbReference type="STRING" id="7955.ENSDARP00000002787"/>
<dbReference type="GlyCosmos" id="Q1JPS6">
    <property type="glycosylation" value="1 site, No reported glycans"/>
</dbReference>
<dbReference type="PaxDb" id="7955-ENSDARP00000002787"/>
<dbReference type="Ensembl" id="ENSDART00000018501">
    <property type="protein sequence ID" value="ENSDARP00000002787"/>
    <property type="gene ID" value="ENSDARG00000007553"/>
</dbReference>
<dbReference type="GeneID" id="352918"/>
<dbReference type="KEGG" id="dre:352918"/>
<dbReference type="AGR" id="ZFIN:ZDB-GENE-030314-2"/>
<dbReference type="CTD" id="352918"/>
<dbReference type="ZFIN" id="ZDB-GENE-030314-2">
    <property type="gene designation" value="opn4.1"/>
</dbReference>
<dbReference type="eggNOG" id="KOG3656">
    <property type="taxonomic scope" value="Eukaryota"/>
</dbReference>
<dbReference type="HOGENOM" id="CLU_009579_3_12_1"/>
<dbReference type="InParanoid" id="Q1JPS6"/>
<dbReference type="OMA" id="YFAIFRA"/>
<dbReference type="OrthoDB" id="9996086at2759"/>
<dbReference type="PhylomeDB" id="Q1JPS6"/>
<dbReference type="TreeFam" id="TF324998"/>
<dbReference type="PRO" id="PR:Q1JPS6"/>
<dbReference type="Proteomes" id="UP000000437">
    <property type="component" value="Chromosome 2"/>
</dbReference>
<dbReference type="Bgee" id="ENSDARG00000007553">
    <property type="expression patterns" value="Expressed in head and 13 other cell types or tissues"/>
</dbReference>
<dbReference type="ExpressionAtlas" id="Q1JPS6">
    <property type="expression patterns" value="baseline"/>
</dbReference>
<dbReference type="GO" id="GO:0005886">
    <property type="term" value="C:plasma membrane"/>
    <property type="evidence" value="ECO:0000250"/>
    <property type="project" value="UniProtKB"/>
</dbReference>
<dbReference type="GO" id="GO:0008020">
    <property type="term" value="F:G protein-coupled photoreceptor activity"/>
    <property type="evidence" value="ECO:0000318"/>
    <property type="project" value="GO_Central"/>
</dbReference>
<dbReference type="GO" id="GO:0009881">
    <property type="term" value="F:photoreceptor activity"/>
    <property type="evidence" value="ECO:0000314"/>
    <property type="project" value="ZFIN"/>
</dbReference>
<dbReference type="GO" id="GO:0071482">
    <property type="term" value="P:cellular response to light stimulus"/>
    <property type="evidence" value="ECO:0000318"/>
    <property type="project" value="GO_Central"/>
</dbReference>
<dbReference type="GO" id="GO:0007186">
    <property type="term" value="P:G protein-coupled receptor signaling pathway"/>
    <property type="evidence" value="ECO:0000314"/>
    <property type="project" value="ZFIN"/>
</dbReference>
<dbReference type="GO" id="GO:0030265">
    <property type="term" value="P:phospholipase C-activating opsin-mediated signaling pathway"/>
    <property type="evidence" value="ECO:0000314"/>
    <property type="project" value="ZFIN"/>
</dbReference>
<dbReference type="GO" id="GO:0007602">
    <property type="term" value="P:phototransduction"/>
    <property type="evidence" value="ECO:0000318"/>
    <property type="project" value="GO_Central"/>
</dbReference>
<dbReference type="GO" id="GO:1904059">
    <property type="term" value="P:regulation of locomotor rhythm"/>
    <property type="evidence" value="ECO:0000315"/>
    <property type="project" value="ZFIN"/>
</dbReference>
<dbReference type="GO" id="GO:0007601">
    <property type="term" value="P:visual perception"/>
    <property type="evidence" value="ECO:0007669"/>
    <property type="project" value="InterPro"/>
</dbReference>
<dbReference type="CDD" id="cd15336">
    <property type="entry name" value="7tmA_Melanopsin"/>
    <property type="match status" value="1"/>
</dbReference>
<dbReference type="FunFam" id="1.20.1070.10:FF:000044">
    <property type="entry name" value="Opsin, ultraviolet-sensitive"/>
    <property type="match status" value="1"/>
</dbReference>
<dbReference type="Gene3D" id="1.20.1070.10">
    <property type="entry name" value="Rhodopsin 7-helix transmembrane proteins"/>
    <property type="match status" value="1"/>
</dbReference>
<dbReference type="InterPro" id="IPR050125">
    <property type="entry name" value="GPCR_opsins"/>
</dbReference>
<dbReference type="InterPro" id="IPR000276">
    <property type="entry name" value="GPCR_Rhodpsn"/>
</dbReference>
<dbReference type="InterPro" id="IPR017452">
    <property type="entry name" value="GPCR_Rhodpsn_7TM"/>
</dbReference>
<dbReference type="InterPro" id="IPR001760">
    <property type="entry name" value="Opsin"/>
</dbReference>
<dbReference type="InterPro" id="IPR027430">
    <property type="entry name" value="Retinal_BS"/>
</dbReference>
<dbReference type="PANTHER" id="PTHR24240">
    <property type="entry name" value="OPSIN"/>
    <property type="match status" value="1"/>
</dbReference>
<dbReference type="Pfam" id="PF00001">
    <property type="entry name" value="7tm_1"/>
    <property type="match status" value="1"/>
</dbReference>
<dbReference type="PRINTS" id="PR00237">
    <property type="entry name" value="GPCRRHODOPSN"/>
</dbReference>
<dbReference type="PRINTS" id="PR00238">
    <property type="entry name" value="OPSIN"/>
</dbReference>
<dbReference type="SMART" id="SM01381">
    <property type="entry name" value="7TM_GPCR_Srsx"/>
    <property type="match status" value="1"/>
</dbReference>
<dbReference type="SUPFAM" id="SSF81321">
    <property type="entry name" value="Family A G protein-coupled receptor-like"/>
    <property type="match status" value="1"/>
</dbReference>
<dbReference type="PROSITE" id="PS00237">
    <property type="entry name" value="G_PROTEIN_RECEP_F1_1"/>
    <property type="match status" value="1"/>
</dbReference>
<dbReference type="PROSITE" id="PS50262">
    <property type="entry name" value="G_PROTEIN_RECEP_F1_2"/>
    <property type="match status" value="1"/>
</dbReference>
<dbReference type="PROSITE" id="PS00238">
    <property type="entry name" value="OPSIN"/>
    <property type="match status" value="1"/>
</dbReference>
<name>OPN4L_DANRE</name>
<sequence>MSHHSSWRGHHCAPGDINCTAGFKESLGSRNYKLLHVPVHGPTHSHHHDPPHPFPTVDVPDHAHYIIGSVILIVGITGVIGNALVVYVFCRSRTLRTAGNMFIVNLAVADFLMSVTQSPVFFAASLHRRWVFGERPCELYAFCGALFGICSMMTLTAIAADRCLAITQPLALVSRVSRRKAGAVLVVVWLYSLGWSLPPFFGWSAYVPEGLQTSCSWDYMTFTPSVRAYTILLFVFVFFIPLGIIGSCYFAIFQTIRAAGKEIRELDCGETHKVYERMQNEWKMAKVALVVIVLFIISWSPYSVVALTATAGYSHFLTPYMNSVPAVIAKASAIHNPIIYAITHPKYRVAIARYIPVLRPILRVKEKDLRSSFSSGSVSSRRPTLTSQCSLGVSMGNAARANGRWGKTRLSSASDSDSCWTESEADGSSVSSLTFGRRVSTEISTDTVILSSGSSVSNASGQKSERAHKVISVPVPSITFETDAADGESLSDGKALLGGN</sequence>
<feature type="chain" id="PRO_0000270989" description="Melanopsin-like">
    <location>
        <begin position="1"/>
        <end position="500"/>
    </location>
</feature>
<feature type="topological domain" description="Extracellular" evidence="3">
    <location>
        <begin position="1"/>
        <end position="65"/>
    </location>
</feature>
<feature type="transmembrane region" description="Helical; Name=1" evidence="3">
    <location>
        <begin position="66"/>
        <end position="86"/>
    </location>
</feature>
<feature type="topological domain" description="Cytoplasmic" evidence="3">
    <location>
        <begin position="87"/>
        <end position="101"/>
    </location>
</feature>
<feature type="transmembrane region" description="Helical; Name=2" evidence="3">
    <location>
        <begin position="102"/>
        <end position="122"/>
    </location>
</feature>
<feature type="topological domain" description="Extracellular" evidence="3">
    <location>
        <begin position="123"/>
        <end position="138"/>
    </location>
</feature>
<feature type="transmembrane region" description="Helical; Name=3" evidence="3">
    <location>
        <begin position="139"/>
        <end position="159"/>
    </location>
</feature>
<feature type="topological domain" description="Cytoplasmic" evidence="3">
    <location>
        <begin position="160"/>
        <end position="182"/>
    </location>
</feature>
<feature type="transmembrane region" description="Helical; Name=4" evidence="3">
    <location>
        <begin position="183"/>
        <end position="203"/>
    </location>
</feature>
<feature type="topological domain" description="Extracellular" evidence="3">
    <location>
        <begin position="204"/>
        <end position="232"/>
    </location>
</feature>
<feature type="transmembrane region" description="Helical; Name=5" evidence="3">
    <location>
        <begin position="233"/>
        <end position="253"/>
    </location>
</feature>
<feature type="topological domain" description="Cytoplasmic" evidence="3">
    <location>
        <begin position="254"/>
        <end position="286"/>
    </location>
</feature>
<feature type="transmembrane region" description="Helical; Name=6" evidence="3">
    <location>
        <begin position="287"/>
        <end position="307"/>
    </location>
</feature>
<feature type="topological domain" description="Extracellular" evidence="3">
    <location>
        <begin position="308"/>
        <end position="322"/>
    </location>
</feature>
<feature type="transmembrane region" description="Helical; Name=7" evidence="3">
    <location>
        <begin position="323"/>
        <end position="343"/>
    </location>
</feature>
<feature type="topological domain" description="Cytoplasmic" evidence="3">
    <location>
        <begin position="344"/>
        <end position="500"/>
    </location>
</feature>
<feature type="region of interest" description="Disordered" evidence="5">
    <location>
        <begin position="404"/>
        <end position="428"/>
    </location>
</feature>
<feature type="compositionally biased region" description="Polar residues" evidence="5">
    <location>
        <begin position="409"/>
        <end position="428"/>
    </location>
</feature>
<feature type="modified residue" description="N6-(retinylidene)lysine" evidence="1">
    <location>
        <position position="330"/>
    </location>
</feature>
<feature type="glycosylation site" description="N-linked (GlcNAc...) asparagine" evidence="3">
    <location>
        <position position="18"/>
    </location>
</feature>
<feature type="disulfide bond" evidence="4">
    <location>
        <begin position="137"/>
        <end position="215"/>
    </location>
</feature>
<feature type="sequence conflict" description="In Ref. 1; AAL82577." evidence="7" ref="1">
    <original>L</original>
    <variation>F</variation>
    <location>
        <position position="185"/>
    </location>
</feature>
<feature type="sequence conflict" description="In Ref. 1; AAL82577." evidence="7" ref="1">
    <original>V</original>
    <variation>L</variation>
    <location>
        <position position="293"/>
    </location>
</feature>
<feature type="sequence conflict" description="In Ref. 1; AAL82577." evidence="7" ref="1">
    <original>S</original>
    <variation>SH</variation>
    <location>
        <position position="387"/>
    </location>
</feature>
<feature type="sequence conflict" description="In Ref. 1; AAL82577." evidence="7" ref="1">
    <original>S</original>
    <variation>P</variation>
    <location>
        <position position="452"/>
    </location>
</feature>
<feature type="sequence conflict" description="In Ref. 1; AAL82577." evidence="7" ref="1">
    <original>I</original>
    <variation>V</variation>
    <location>
        <position position="471"/>
    </location>
</feature>
<proteinExistence type="evidence at transcript level"/>
<evidence type="ECO:0000250" key="1"/>
<evidence type="ECO:0000250" key="2">
    <source>
        <dbReference type="UniProtKB" id="Q9QXZ9"/>
    </source>
</evidence>
<evidence type="ECO:0000255" key="3"/>
<evidence type="ECO:0000255" key="4">
    <source>
        <dbReference type="PROSITE-ProRule" id="PRU00521"/>
    </source>
</evidence>
<evidence type="ECO:0000256" key="5">
    <source>
        <dbReference type="SAM" id="MobiDB-lite"/>
    </source>
</evidence>
<evidence type="ECO:0000269" key="6">
    <source>
    </source>
</evidence>
<evidence type="ECO:0000305" key="7"/>
<evidence type="ECO:0000312" key="8">
    <source>
        <dbReference type="EMBL" id="AAI16615.1"/>
    </source>
</evidence>
<evidence type="ECO:0000312" key="9">
    <source>
        <dbReference type="EMBL" id="AAL82577.1"/>
    </source>
</evidence>